<protein>
    <recommendedName>
        <fullName evidence="1">Phosphoribosylformylglycinamidine cyclo-ligase</fullName>
        <ecNumber evidence="1">6.3.3.1</ecNumber>
    </recommendedName>
    <alternativeName>
        <fullName evidence="1">AIR synthase</fullName>
    </alternativeName>
    <alternativeName>
        <fullName evidence="1">AIRS</fullName>
    </alternativeName>
    <alternativeName>
        <fullName evidence="1">Phosphoribosyl-aminoimidazole synthetase</fullName>
    </alternativeName>
</protein>
<feature type="chain" id="PRO_0000258431" description="Phosphoribosylformylglycinamidine cyclo-ligase">
    <location>
        <begin position="1"/>
        <end position="341"/>
    </location>
</feature>
<gene>
    <name evidence="1" type="primary">purM</name>
    <name type="ordered locus">XOO1297</name>
</gene>
<proteinExistence type="inferred from homology"/>
<comment type="catalytic activity">
    <reaction evidence="1">
        <text>2-formamido-N(1)-(5-O-phospho-beta-D-ribosyl)acetamidine + ATP = 5-amino-1-(5-phospho-beta-D-ribosyl)imidazole + ADP + phosphate + H(+)</text>
        <dbReference type="Rhea" id="RHEA:23032"/>
        <dbReference type="ChEBI" id="CHEBI:15378"/>
        <dbReference type="ChEBI" id="CHEBI:30616"/>
        <dbReference type="ChEBI" id="CHEBI:43474"/>
        <dbReference type="ChEBI" id="CHEBI:137981"/>
        <dbReference type="ChEBI" id="CHEBI:147287"/>
        <dbReference type="ChEBI" id="CHEBI:456216"/>
        <dbReference type="EC" id="6.3.3.1"/>
    </reaction>
</comment>
<comment type="pathway">
    <text evidence="1">Purine metabolism; IMP biosynthesis via de novo pathway; 5-amino-1-(5-phospho-D-ribosyl)imidazole from N(2)-formyl-N(1)-(5-phospho-D-ribosyl)glycinamide: step 2/2.</text>
</comment>
<comment type="subcellular location">
    <subcellularLocation>
        <location evidence="1">Cytoplasm</location>
    </subcellularLocation>
</comment>
<comment type="similarity">
    <text evidence="1">Belongs to the AIR synthase family.</text>
</comment>
<comment type="sequence caution" evidence="2">
    <conflict type="erroneous initiation">
        <sequence resource="EMBL-CDS" id="AAW74551"/>
    </conflict>
</comment>
<reference key="1">
    <citation type="journal article" date="2005" name="Nucleic Acids Res.">
        <title>The genome sequence of Xanthomonas oryzae pathovar oryzae KACC10331, the bacterial blight pathogen of rice.</title>
        <authorList>
            <person name="Lee B.-M."/>
            <person name="Park Y.-J."/>
            <person name="Park D.-S."/>
            <person name="Kang H.-W."/>
            <person name="Kim J.-G."/>
            <person name="Song E.-S."/>
            <person name="Park I.-C."/>
            <person name="Yoon U.-H."/>
            <person name="Hahn J.-H."/>
            <person name="Koo B.-S."/>
            <person name="Lee G.-B."/>
            <person name="Kim H."/>
            <person name="Park H.-S."/>
            <person name="Yoon K.-O."/>
            <person name="Kim J.-H."/>
            <person name="Jung C.-H."/>
            <person name="Koh N.-H."/>
            <person name="Seo J.-S."/>
            <person name="Go S.-J."/>
        </authorList>
    </citation>
    <scope>NUCLEOTIDE SEQUENCE [LARGE SCALE GENOMIC DNA]</scope>
    <source>
        <strain>KACC10331 / KXO85</strain>
    </source>
</reference>
<dbReference type="EC" id="6.3.3.1" evidence="1"/>
<dbReference type="EMBL" id="AE013598">
    <property type="protein sequence ID" value="AAW74551.1"/>
    <property type="status" value="ALT_INIT"/>
    <property type="molecule type" value="Genomic_DNA"/>
</dbReference>
<dbReference type="SMR" id="Q5H3C0"/>
<dbReference type="STRING" id="291331.XOO1297"/>
<dbReference type="KEGG" id="xoo:XOO1297"/>
<dbReference type="HOGENOM" id="CLU_047116_0_0_6"/>
<dbReference type="UniPathway" id="UPA00074">
    <property type="reaction ID" value="UER00129"/>
</dbReference>
<dbReference type="Proteomes" id="UP000006735">
    <property type="component" value="Chromosome"/>
</dbReference>
<dbReference type="GO" id="GO:0005829">
    <property type="term" value="C:cytosol"/>
    <property type="evidence" value="ECO:0007669"/>
    <property type="project" value="TreeGrafter"/>
</dbReference>
<dbReference type="GO" id="GO:0005524">
    <property type="term" value="F:ATP binding"/>
    <property type="evidence" value="ECO:0007669"/>
    <property type="project" value="UniProtKB-KW"/>
</dbReference>
<dbReference type="GO" id="GO:0004637">
    <property type="term" value="F:phosphoribosylamine-glycine ligase activity"/>
    <property type="evidence" value="ECO:0007669"/>
    <property type="project" value="TreeGrafter"/>
</dbReference>
<dbReference type="GO" id="GO:0004641">
    <property type="term" value="F:phosphoribosylformylglycinamidine cyclo-ligase activity"/>
    <property type="evidence" value="ECO:0007669"/>
    <property type="project" value="UniProtKB-UniRule"/>
</dbReference>
<dbReference type="GO" id="GO:0006189">
    <property type="term" value="P:'de novo' IMP biosynthetic process"/>
    <property type="evidence" value="ECO:0007669"/>
    <property type="project" value="UniProtKB-UniRule"/>
</dbReference>
<dbReference type="GO" id="GO:0046084">
    <property type="term" value="P:adenine biosynthetic process"/>
    <property type="evidence" value="ECO:0007669"/>
    <property type="project" value="TreeGrafter"/>
</dbReference>
<dbReference type="CDD" id="cd02196">
    <property type="entry name" value="PurM"/>
    <property type="match status" value="1"/>
</dbReference>
<dbReference type="FunFam" id="3.30.1330.10:FF:000001">
    <property type="entry name" value="Phosphoribosylformylglycinamidine cyclo-ligase"/>
    <property type="match status" value="1"/>
</dbReference>
<dbReference type="FunFam" id="3.90.650.10:FF:000001">
    <property type="entry name" value="Phosphoribosylformylglycinamidine cyclo-ligase"/>
    <property type="match status" value="1"/>
</dbReference>
<dbReference type="Gene3D" id="3.90.650.10">
    <property type="entry name" value="PurM-like C-terminal domain"/>
    <property type="match status" value="1"/>
</dbReference>
<dbReference type="Gene3D" id="3.30.1330.10">
    <property type="entry name" value="PurM-like, N-terminal domain"/>
    <property type="match status" value="1"/>
</dbReference>
<dbReference type="HAMAP" id="MF_00741">
    <property type="entry name" value="AIRS"/>
    <property type="match status" value="1"/>
</dbReference>
<dbReference type="InterPro" id="IPR010918">
    <property type="entry name" value="PurM-like_C_dom"/>
</dbReference>
<dbReference type="InterPro" id="IPR036676">
    <property type="entry name" value="PurM-like_C_sf"/>
</dbReference>
<dbReference type="InterPro" id="IPR016188">
    <property type="entry name" value="PurM-like_N"/>
</dbReference>
<dbReference type="InterPro" id="IPR036921">
    <property type="entry name" value="PurM-like_N_sf"/>
</dbReference>
<dbReference type="InterPro" id="IPR004733">
    <property type="entry name" value="PurM_cligase"/>
</dbReference>
<dbReference type="NCBIfam" id="TIGR00878">
    <property type="entry name" value="purM"/>
    <property type="match status" value="1"/>
</dbReference>
<dbReference type="PANTHER" id="PTHR10520:SF12">
    <property type="entry name" value="TRIFUNCTIONAL PURINE BIOSYNTHETIC PROTEIN ADENOSINE-3"/>
    <property type="match status" value="1"/>
</dbReference>
<dbReference type="PANTHER" id="PTHR10520">
    <property type="entry name" value="TRIFUNCTIONAL PURINE BIOSYNTHETIC PROTEIN ADENOSINE-3-RELATED"/>
    <property type="match status" value="1"/>
</dbReference>
<dbReference type="Pfam" id="PF00586">
    <property type="entry name" value="AIRS"/>
    <property type="match status" value="1"/>
</dbReference>
<dbReference type="Pfam" id="PF02769">
    <property type="entry name" value="AIRS_C"/>
    <property type="match status" value="1"/>
</dbReference>
<dbReference type="SUPFAM" id="SSF56042">
    <property type="entry name" value="PurM C-terminal domain-like"/>
    <property type="match status" value="1"/>
</dbReference>
<dbReference type="SUPFAM" id="SSF55326">
    <property type="entry name" value="PurM N-terminal domain-like"/>
    <property type="match status" value="1"/>
</dbReference>
<keyword id="KW-0067">ATP-binding</keyword>
<keyword id="KW-0963">Cytoplasm</keyword>
<keyword id="KW-0436">Ligase</keyword>
<keyword id="KW-0547">Nucleotide-binding</keyword>
<keyword id="KW-0658">Purine biosynthesis</keyword>
<keyword id="KW-1185">Reference proteome</keyword>
<name>PUR5_XANOR</name>
<organism>
    <name type="scientific">Xanthomonas oryzae pv. oryzae (strain KACC10331 / KXO85)</name>
    <dbReference type="NCBI Taxonomy" id="291331"/>
    <lineage>
        <taxon>Bacteria</taxon>
        <taxon>Pseudomonadati</taxon>
        <taxon>Pseudomonadota</taxon>
        <taxon>Gammaproteobacteria</taxon>
        <taxon>Lysobacterales</taxon>
        <taxon>Lysobacteraceae</taxon>
        <taxon>Xanthomonas</taxon>
    </lineage>
</organism>
<sequence length="341" mass="35824">MTYRDAGVDIDAGNALVERIKPLVKRSFRPEVMGGLGGFGALFDLSGKYKEPVLVSGTDGVGTKLKLAQQLGRHDTIGIDLVGMCVNDVLVQGAEPLFFLDYFATGKLDVDTAAAVVGGIARGCALSGCALIGGETAEMPDMYPPGEYDLAGFTVGAVEKSQLLDGAQVRDGDVLIGIASSGPHSNGYSLIRKIYERAGAPAEHVLDDGTKLIDALMAPTALYVKPVLALLKSHGQAIHAMAHITGGGLTENIIRVIPDGLGLDIDASAWTLPPVFAWLQREGAVADAEMWRTFNCGIGFVLIAAPAEAAALEQALDAQSLAHWRIGQVVPAHGDERVRID</sequence>
<evidence type="ECO:0000255" key="1">
    <source>
        <dbReference type="HAMAP-Rule" id="MF_00741"/>
    </source>
</evidence>
<evidence type="ECO:0000305" key="2"/>
<accession>Q5H3C0</accession>